<keyword id="KW-0056">Arginine metabolism</keyword>
<keyword id="KW-0520">NAD</keyword>
<keyword id="KW-0560">Oxidoreductase</keyword>
<accession>B0T8I8</accession>
<organism>
    <name type="scientific">Caulobacter sp. (strain K31)</name>
    <dbReference type="NCBI Taxonomy" id="366602"/>
    <lineage>
        <taxon>Bacteria</taxon>
        <taxon>Pseudomonadati</taxon>
        <taxon>Pseudomonadota</taxon>
        <taxon>Alphaproteobacteria</taxon>
        <taxon>Caulobacterales</taxon>
        <taxon>Caulobacteraceae</taxon>
        <taxon>Caulobacter</taxon>
    </lineage>
</organism>
<reference key="1">
    <citation type="submission" date="2008-01" db="EMBL/GenBank/DDBJ databases">
        <title>Complete sequence of chromosome of Caulobacter sp. K31.</title>
        <authorList>
            <consortium name="US DOE Joint Genome Institute"/>
            <person name="Copeland A."/>
            <person name="Lucas S."/>
            <person name="Lapidus A."/>
            <person name="Barry K."/>
            <person name="Glavina del Rio T."/>
            <person name="Dalin E."/>
            <person name="Tice H."/>
            <person name="Pitluck S."/>
            <person name="Bruce D."/>
            <person name="Goodwin L."/>
            <person name="Thompson L.S."/>
            <person name="Brettin T."/>
            <person name="Detter J.C."/>
            <person name="Han C."/>
            <person name="Schmutz J."/>
            <person name="Larimer F."/>
            <person name="Land M."/>
            <person name="Hauser L."/>
            <person name="Kyrpides N."/>
            <person name="Kim E."/>
            <person name="Stephens C."/>
            <person name="Richardson P."/>
        </authorList>
    </citation>
    <scope>NUCLEOTIDE SEQUENCE [LARGE SCALE GENOMIC DNA]</scope>
    <source>
        <strain>K31</strain>
    </source>
</reference>
<name>ASTD_CAUSK</name>
<proteinExistence type="inferred from homology"/>
<protein>
    <recommendedName>
        <fullName evidence="1">N-succinylglutamate 5-semialdehyde dehydrogenase</fullName>
        <ecNumber evidence="1">1.2.1.71</ecNumber>
    </recommendedName>
    <alternativeName>
        <fullName evidence="1">Succinylglutamic semialdehyde dehydrogenase</fullName>
        <shortName evidence="1">SGSD</shortName>
    </alternativeName>
</protein>
<evidence type="ECO:0000255" key="1">
    <source>
        <dbReference type="HAMAP-Rule" id="MF_01174"/>
    </source>
</evidence>
<dbReference type="EC" id="1.2.1.71" evidence="1"/>
<dbReference type="EMBL" id="CP000927">
    <property type="protein sequence ID" value="ABZ71331.1"/>
    <property type="molecule type" value="Genomic_DNA"/>
</dbReference>
<dbReference type="SMR" id="B0T8I8"/>
<dbReference type="STRING" id="366602.Caul_2203"/>
<dbReference type="KEGG" id="cak:Caul_2203"/>
<dbReference type="eggNOG" id="COG1012">
    <property type="taxonomic scope" value="Bacteria"/>
</dbReference>
<dbReference type="HOGENOM" id="CLU_005391_1_0_5"/>
<dbReference type="OrthoDB" id="9802947at2"/>
<dbReference type="UniPathway" id="UPA00185">
    <property type="reaction ID" value="UER00282"/>
</dbReference>
<dbReference type="GO" id="GO:0043824">
    <property type="term" value="F:succinylglutamate-semialdehyde dehydrogenase activity"/>
    <property type="evidence" value="ECO:0007669"/>
    <property type="project" value="UniProtKB-EC"/>
</dbReference>
<dbReference type="GO" id="GO:0019544">
    <property type="term" value="P:arginine catabolic process to glutamate"/>
    <property type="evidence" value="ECO:0007669"/>
    <property type="project" value="UniProtKB-UniRule"/>
</dbReference>
<dbReference type="GO" id="GO:0019545">
    <property type="term" value="P:arginine catabolic process to succinate"/>
    <property type="evidence" value="ECO:0007669"/>
    <property type="project" value="UniProtKB-UniRule"/>
</dbReference>
<dbReference type="CDD" id="cd07095">
    <property type="entry name" value="ALDH_SGSD_AstD"/>
    <property type="match status" value="1"/>
</dbReference>
<dbReference type="FunFam" id="3.40.605.10:FF:000010">
    <property type="entry name" value="N-succinylglutamate 5-semialdehyde dehydrogenase"/>
    <property type="match status" value="1"/>
</dbReference>
<dbReference type="Gene3D" id="3.40.605.10">
    <property type="entry name" value="Aldehyde Dehydrogenase, Chain A, domain 1"/>
    <property type="match status" value="1"/>
</dbReference>
<dbReference type="Gene3D" id="3.40.309.10">
    <property type="entry name" value="Aldehyde Dehydrogenase, Chain A, domain 2"/>
    <property type="match status" value="1"/>
</dbReference>
<dbReference type="HAMAP" id="MF_01174">
    <property type="entry name" value="Aldedh_AstD"/>
    <property type="match status" value="1"/>
</dbReference>
<dbReference type="InterPro" id="IPR016161">
    <property type="entry name" value="Ald_DH/histidinol_DH"/>
</dbReference>
<dbReference type="InterPro" id="IPR016163">
    <property type="entry name" value="Ald_DH_C"/>
</dbReference>
<dbReference type="InterPro" id="IPR016160">
    <property type="entry name" value="Ald_DH_CS_CYS"/>
</dbReference>
<dbReference type="InterPro" id="IPR029510">
    <property type="entry name" value="Ald_DH_CS_GLU"/>
</dbReference>
<dbReference type="InterPro" id="IPR016162">
    <property type="entry name" value="Ald_DH_N"/>
</dbReference>
<dbReference type="InterPro" id="IPR015590">
    <property type="entry name" value="Aldehyde_DH_dom"/>
</dbReference>
<dbReference type="InterPro" id="IPR017649">
    <property type="entry name" value="SuccinylGlu_semiald_DH_AstD"/>
</dbReference>
<dbReference type="NCBIfam" id="TIGR03240">
    <property type="entry name" value="arg_catab_astD"/>
    <property type="match status" value="1"/>
</dbReference>
<dbReference type="NCBIfam" id="NF006992">
    <property type="entry name" value="PRK09457.1"/>
    <property type="match status" value="1"/>
</dbReference>
<dbReference type="PANTHER" id="PTHR11699">
    <property type="entry name" value="ALDEHYDE DEHYDROGENASE-RELATED"/>
    <property type="match status" value="1"/>
</dbReference>
<dbReference type="Pfam" id="PF00171">
    <property type="entry name" value="Aldedh"/>
    <property type="match status" value="1"/>
</dbReference>
<dbReference type="SUPFAM" id="SSF53720">
    <property type="entry name" value="ALDH-like"/>
    <property type="match status" value="1"/>
</dbReference>
<dbReference type="PROSITE" id="PS00070">
    <property type="entry name" value="ALDEHYDE_DEHYDR_CYS"/>
    <property type="match status" value="1"/>
</dbReference>
<dbReference type="PROSITE" id="PS00687">
    <property type="entry name" value="ALDEHYDE_DEHYDR_GLU"/>
    <property type="match status" value="1"/>
</dbReference>
<gene>
    <name evidence="1" type="primary">astD</name>
    <name type="ordered locus">Caul_2203</name>
</gene>
<feature type="chain" id="PRO_1000085401" description="N-succinylglutamate 5-semialdehyde dehydrogenase">
    <location>
        <begin position="1"/>
        <end position="484"/>
    </location>
</feature>
<feature type="active site" evidence="1">
    <location>
        <position position="244"/>
    </location>
</feature>
<feature type="active site" evidence="1">
    <location>
        <position position="278"/>
    </location>
</feature>
<feature type="binding site" evidence="1">
    <location>
        <begin position="221"/>
        <end position="226"/>
    </location>
    <ligand>
        <name>NAD(+)</name>
        <dbReference type="ChEBI" id="CHEBI:57540"/>
    </ligand>
</feature>
<comment type="function">
    <text evidence="1">Catalyzes the NAD-dependent reduction of succinylglutamate semialdehyde into succinylglutamate.</text>
</comment>
<comment type="catalytic activity">
    <reaction evidence="1">
        <text>N-succinyl-L-glutamate 5-semialdehyde + NAD(+) + H2O = N-succinyl-L-glutamate + NADH + 2 H(+)</text>
        <dbReference type="Rhea" id="RHEA:10812"/>
        <dbReference type="ChEBI" id="CHEBI:15377"/>
        <dbReference type="ChEBI" id="CHEBI:15378"/>
        <dbReference type="ChEBI" id="CHEBI:57540"/>
        <dbReference type="ChEBI" id="CHEBI:57945"/>
        <dbReference type="ChEBI" id="CHEBI:58520"/>
        <dbReference type="ChEBI" id="CHEBI:58763"/>
        <dbReference type="EC" id="1.2.1.71"/>
    </reaction>
</comment>
<comment type="pathway">
    <text evidence="1">Amino-acid degradation; L-arginine degradation via AST pathway; L-glutamate and succinate from L-arginine: step 4/5.</text>
</comment>
<comment type="similarity">
    <text evidence="1">Belongs to the aldehyde dehydrogenase family. AstD subfamily.</text>
</comment>
<sequence length="484" mass="50856">MSGGLFIDGVWRAGAGAQATSVDPTTGEVIWRQATASTAEVAAAVEAARKAFPAWADRSREERIAVLRRYKDVLVARTGTFAEALSRETGKALWETKAELGSMAGKVEASIKAYDERTGEHANDMAFGRAVLRHRAHGVMAVLGPFNFPGHLPNGHIVPALLAGDTVVFKPSEETPLAGQLLVEALEEAGVPAGVINLVQGGREVGQALIDQEIDGLLFTGSAAAGAFFRRHFADRPDVILALELGGNNPLVVWDAGDPEAVAALIVQSAFITTGQRCSCARRLIVSDDAAGRAVIDAVAALSERLVIGPWNGGQEPFMGPLISDRAAAMALAGAKAMPGQTLRAMTSVDGLSRAFVSPGLVDVTGETVPDEELFAPLLQVRRVGSFEEAIAAANATRYGLSAGLVSNETAHWDRFLTRIRAGVVNWNRPTTGAAGTMPFGGLGNSGNHRPSAYYAADYCAYPVASFEAENVTNTLGDIKGLRA</sequence>